<reference key="1">
    <citation type="journal article" date="1992" name="Gene">
        <title>The Azotobacter vinelandii recA gene: sequence analysis and regulation of expression.</title>
        <authorList>
            <person name="Venkatesh T.V."/>
            <person name="Das H.K."/>
        </authorList>
    </citation>
    <scope>NUCLEOTIDE SEQUENCE [GENOMIC DNA]</scope>
</reference>
<sequence length="349" mass="37203">MDENKKRALAAALGQIEKQFGKGAVMRMGDHERQAIPAISTGSLGLDIALGIGGLPKGRIVEIYGPESSGKTTLTLSTIAEAQKQGATCAFVDAEHALDPDYAAKLGVNVDDLLVSQPDTGEQALEITDMLVRSNAVDVIIVDSVAALVPKAEIEGEMGDQHVGLQARLMSQALRKITGNIQNANCLVIFINQIRMKIGVMFGNPETTTGANALKFYASVRLDIRRTGAVKESDEVIGSETRVKVVKNKVAPPFRQAEFQILYGKGIYRNGEIIDLGVQLGLLEKSGAWYSYQGSKIGQGKANAAKFLEDNPEVAAAVEKSIRDQLLAAPASARPAALADEPADADLDY</sequence>
<organism>
    <name type="scientific">Azotobacter vinelandii</name>
    <dbReference type="NCBI Taxonomy" id="354"/>
    <lineage>
        <taxon>Bacteria</taxon>
        <taxon>Pseudomonadati</taxon>
        <taxon>Pseudomonadota</taxon>
        <taxon>Gammaproteobacteria</taxon>
        <taxon>Pseudomonadales</taxon>
        <taxon>Pseudomonadaceae</taxon>
        <taxon>Azotobacter</taxon>
    </lineage>
</organism>
<dbReference type="EMBL" id="S96898">
    <property type="status" value="NOT_ANNOTATED_CDS"/>
    <property type="molecule type" value="Genomic_DNA"/>
</dbReference>
<dbReference type="PIR" id="JN0321">
    <property type="entry name" value="JN0321"/>
</dbReference>
<dbReference type="SMR" id="P29246"/>
<dbReference type="GO" id="GO:0005829">
    <property type="term" value="C:cytosol"/>
    <property type="evidence" value="ECO:0007669"/>
    <property type="project" value="TreeGrafter"/>
</dbReference>
<dbReference type="GO" id="GO:0005524">
    <property type="term" value="F:ATP binding"/>
    <property type="evidence" value="ECO:0007669"/>
    <property type="project" value="UniProtKB-UniRule"/>
</dbReference>
<dbReference type="GO" id="GO:0016887">
    <property type="term" value="F:ATP hydrolysis activity"/>
    <property type="evidence" value="ECO:0007669"/>
    <property type="project" value="InterPro"/>
</dbReference>
<dbReference type="GO" id="GO:0140664">
    <property type="term" value="F:ATP-dependent DNA damage sensor activity"/>
    <property type="evidence" value="ECO:0007669"/>
    <property type="project" value="InterPro"/>
</dbReference>
<dbReference type="GO" id="GO:0003684">
    <property type="term" value="F:damaged DNA binding"/>
    <property type="evidence" value="ECO:0007669"/>
    <property type="project" value="UniProtKB-UniRule"/>
</dbReference>
<dbReference type="GO" id="GO:0003697">
    <property type="term" value="F:single-stranded DNA binding"/>
    <property type="evidence" value="ECO:0007669"/>
    <property type="project" value="UniProtKB-UniRule"/>
</dbReference>
<dbReference type="GO" id="GO:0006310">
    <property type="term" value="P:DNA recombination"/>
    <property type="evidence" value="ECO:0007669"/>
    <property type="project" value="UniProtKB-UniRule"/>
</dbReference>
<dbReference type="GO" id="GO:0006281">
    <property type="term" value="P:DNA repair"/>
    <property type="evidence" value="ECO:0007669"/>
    <property type="project" value="UniProtKB-UniRule"/>
</dbReference>
<dbReference type="GO" id="GO:0009432">
    <property type="term" value="P:SOS response"/>
    <property type="evidence" value="ECO:0007669"/>
    <property type="project" value="UniProtKB-UniRule"/>
</dbReference>
<dbReference type="CDD" id="cd00983">
    <property type="entry name" value="RecA"/>
    <property type="match status" value="1"/>
</dbReference>
<dbReference type="FunFam" id="3.40.50.300:FF:000087">
    <property type="entry name" value="Recombinase RecA"/>
    <property type="match status" value="1"/>
</dbReference>
<dbReference type="Gene3D" id="3.40.50.300">
    <property type="entry name" value="P-loop containing nucleotide triphosphate hydrolases"/>
    <property type="match status" value="1"/>
</dbReference>
<dbReference type="HAMAP" id="MF_00268">
    <property type="entry name" value="RecA"/>
    <property type="match status" value="1"/>
</dbReference>
<dbReference type="InterPro" id="IPR003593">
    <property type="entry name" value="AAA+_ATPase"/>
</dbReference>
<dbReference type="InterPro" id="IPR013765">
    <property type="entry name" value="DNA_recomb/repair_RecA"/>
</dbReference>
<dbReference type="InterPro" id="IPR020584">
    <property type="entry name" value="DNA_recomb/repair_RecA_CS"/>
</dbReference>
<dbReference type="InterPro" id="IPR027417">
    <property type="entry name" value="P-loop_NTPase"/>
</dbReference>
<dbReference type="InterPro" id="IPR049261">
    <property type="entry name" value="RecA-like_C"/>
</dbReference>
<dbReference type="InterPro" id="IPR049428">
    <property type="entry name" value="RecA-like_N"/>
</dbReference>
<dbReference type="InterPro" id="IPR020588">
    <property type="entry name" value="RecA_ATP-bd"/>
</dbReference>
<dbReference type="InterPro" id="IPR023400">
    <property type="entry name" value="RecA_C_sf"/>
</dbReference>
<dbReference type="InterPro" id="IPR020587">
    <property type="entry name" value="RecA_monomer-monomer_interface"/>
</dbReference>
<dbReference type="NCBIfam" id="TIGR02012">
    <property type="entry name" value="tigrfam_recA"/>
    <property type="match status" value="1"/>
</dbReference>
<dbReference type="PANTHER" id="PTHR45900:SF1">
    <property type="entry name" value="MITOCHONDRIAL DNA REPAIR PROTEIN RECA HOMOLOG-RELATED"/>
    <property type="match status" value="1"/>
</dbReference>
<dbReference type="PANTHER" id="PTHR45900">
    <property type="entry name" value="RECA"/>
    <property type="match status" value="1"/>
</dbReference>
<dbReference type="Pfam" id="PF00154">
    <property type="entry name" value="RecA"/>
    <property type="match status" value="1"/>
</dbReference>
<dbReference type="Pfam" id="PF21096">
    <property type="entry name" value="RecA_C"/>
    <property type="match status" value="1"/>
</dbReference>
<dbReference type="PRINTS" id="PR00142">
    <property type="entry name" value="RECA"/>
</dbReference>
<dbReference type="SMART" id="SM00382">
    <property type="entry name" value="AAA"/>
    <property type="match status" value="1"/>
</dbReference>
<dbReference type="SUPFAM" id="SSF52540">
    <property type="entry name" value="P-loop containing nucleoside triphosphate hydrolases"/>
    <property type="match status" value="1"/>
</dbReference>
<dbReference type="SUPFAM" id="SSF54752">
    <property type="entry name" value="RecA protein, C-terminal domain"/>
    <property type="match status" value="1"/>
</dbReference>
<dbReference type="PROSITE" id="PS00321">
    <property type="entry name" value="RECA_1"/>
    <property type="match status" value="1"/>
</dbReference>
<dbReference type="PROSITE" id="PS50162">
    <property type="entry name" value="RECA_2"/>
    <property type="match status" value="1"/>
</dbReference>
<dbReference type="PROSITE" id="PS50163">
    <property type="entry name" value="RECA_3"/>
    <property type="match status" value="1"/>
</dbReference>
<evidence type="ECO:0000255" key="1">
    <source>
        <dbReference type="HAMAP-Rule" id="MF_00268"/>
    </source>
</evidence>
<comment type="function">
    <text evidence="1">Can catalyze the hydrolysis of ATP in the presence of single-stranded DNA, the ATP-dependent uptake of single-stranded DNA by duplex DNA, and the ATP-dependent hybridization of homologous single-stranded DNAs. It interacts with LexA causing its activation and leading to its autocatalytic cleavage.</text>
</comment>
<comment type="subcellular location">
    <subcellularLocation>
        <location evidence="1">Cytoplasm</location>
    </subcellularLocation>
</comment>
<comment type="similarity">
    <text evidence="1">Belongs to the RecA family.</text>
</comment>
<feature type="chain" id="PRO_0000122647" description="Protein RecA">
    <location>
        <begin position="1"/>
        <end position="349"/>
    </location>
</feature>
<feature type="binding site" evidence="1">
    <location>
        <begin position="65"/>
        <end position="72"/>
    </location>
    <ligand>
        <name>ATP</name>
        <dbReference type="ChEBI" id="CHEBI:30616"/>
    </ligand>
</feature>
<gene>
    <name evidence="1" type="primary">recA</name>
</gene>
<keyword id="KW-0067">ATP-binding</keyword>
<keyword id="KW-0963">Cytoplasm</keyword>
<keyword id="KW-0227">DNA damage</keyword>
<keyword id="KW-0233">DNA recombination</keyword>
<keyword id="KW-0234">DNA repair</keyword>
<keyword id="KW-0238">DNA-binding</keyword>
<keyword id="KW-0547">Nucleotide-binding</keyword>
<keyword id="KW-0742">SOS response</keyword>
<protein>
    <recommendedName>
        <fullName evidence="1">Protein RecA</fullName>
    </recommendedName>
    <alternativeName>
        <fullName evidence="1">Recombinase A</fullName>
    </alternativeName>
</protein>
<accession>P29246</accession>
<proteinExistence type="inferred from homology"/>
<name>RECA_AZOVI</name>